<protein>
    <recommendedName>
        <fullName>Tegument protein UL51 homolog</fullName>
    </recommendedName>
</protein>
<keyword id="KW-1035">Host cytoplasm</keyword>
<keyword id="KW-1040">Host Golgi apparatus</keyword>
<keyword id="KW-0449">Lipoprotein</keyword>
<keyword id="KW-0564">Palmitate</keyword>
<keyword id="KW-0597">Phosphoprotein</keyword>
<keyword id="KW-1185">Reference proteome</keyword>
<keyword id="KW-0946">Virion</keyword>
<keyword id="KW-0920">Virion tegument</keyword>
<proteinExistence type="inferred from homology"/>
<organismHost>
    <name type="scientific">Homo sapiens</name>
    <name type="common">Human</name>
    <dbReference type="NCBI Taxonomy" id="9606"/>
</organismHost>
<sequence>MGNCFVKKISSDIFNSNYQMLYSELSEQEDLLDFLETKYTDFGILKTDILNYERDSETFKTLLQVLPIYKKTKLRYNLIERCLNNCPPHVKDALIIEIMKAKKILETLDVVFMKIMIGEFTICSDNVNQLLNKFSIDQTTLCDMEKINTLIDLDEENSKRLLTEIDPLLHQETGLYQALPNAVTDPPSEQRAATKKCYEGFTK</sequence>
<evidence type="ECO:0000250" key="1">
    <source>
        <dbReference type="UniProtKB" id="P10235"/>
    </source>
</evidence>
<evidence type="ECO:0000250" key="2">
    <source>
        <dbReference type="UniProtKB" id="P16823"/>
    </source>
</evidence>
<evidence type="ECO:0000305" key="3"/>
<accession>P52474</accession>
<comment type="function">
    <text evidence="1">Plays several roles during the time course of infection, including egress of virus particles from the perinuclear space and secondary envelopment of cytoplasmic capsids that bud into specific trans-Golgi network (TGN)-derived membranes.</text>
</comment>
<comment type="subunit">
    <text evidence="1 2">Oligomerizes. Interacts with U75; this interaction mediates U75 incorporation to virions.</text>
</comment>
<comment type="subcellular location">
    <subcellularLocation>
        <location evidence="1">Virion tegument</location>
    </subcellularLocation>
    <subcellularLocation>
        <location evidence="1">Host cytoplasm</location>
    </subcellularLocation>
    <subcellularLocation>
        <location evidence="1">Host Golgi apparatus</location>
    </subcellularLocation>
</comment>
<comment type="PTM">
    <text evidence="1">Phosphorylated.</text>
</comment>
<comment type="PTM">
    <text evidence="1">Palmitoylation is necessary for Golgi localization.</text>
</comment>
<comment type="similarity">
    <text evidence="3">Belongs to the herpesviridae UL51 family.</text>
</comment>
<gene>
    <name type="primary">U44</name>
</gene>
<organism>
    <name type="scientific">Human herpesvirus 7 (strain JI)</name>
    <name type="common">HHV-7</name>
    <name type="synonym">Human T lymphotropic virus</name>
    <dbReference type="NCBI Taxonomy" id="57278"/>
    <lineage>
        <taxon>Viruses</taxon>
        <taxon>Duplodnaviria</taxon>
        <taxon>Heunggongvirae</taxon>
        <taxon>Peploviricota</taxon>
        <taxon>Herviviricetes</taxon>
        <taxon>Herpesvirales</taxon>
        <taxon>Orthoherpesviridae</taxon>
        <taxon>Betaherpesvirinae</taxon>
        <taxon>Roseolovirus</taxon>
        <taxon>Roseolovirus humanbeta7</taxon>
        <taxon>Human betaherpesvirus 7</taxon>
    </lineage>
</organism>
<dbReference type="EMBL" id="U43400">
    <property type="protein sequence ID" value="AAC54706.1"/>
    <property type="molecule type" value="Genomic_DNA"/>
</dbReference>
<dbReference type="PIR" id="T41946">
    <property type="entry name" value="T41946"/>
</dbReference>
<dbReference type="RefSeq" id="YP_073784.1">
    <property type="nucleotide sequence ID" value="NC_001716.2"/>
</dbReference>
<dbReference type="GeneID" id="3289502"/>
<dbReference type="KEGG" id="vg:3289502"/>
<dbReference type="Proteomes" id="UP000009246">
    <property type="component" value="Segment"/>
</dbReference>
<dbReference type="GO" id="GO:0044177">
    <property type="term" value="C:host cell Golgi apparatus"/>
    <property type="evidence" value="ECO:0007669"/>
    <property type="project" value="UniProtKB-SubCell"/>
</dbReference>
<dbReference type="GO" id="GO:0019033">
    <property type="term" value="C:viral tegument"/>
    <property type="evidence" value="ECO:0007669"/>
    <property type="project" value="UniProtKB-SubCell"/>
</dbReference>
<dbReference type="InterPro" id="IPR007619">
    <property type="entry name" value="Herpes_U44"/>
</dbReference>
<dbReference type="Pfam" id="PF04533">
    <property type="entry name" value="Herpes_U44"/>
    <property type="match status" value="1"/>
</dbReference>
<name>TEG7_HHV7J</name>
<feature type="chain" id="PRO_0000116211" description="Tegument protein UL51 homolog">
    <location>
        <begin position="1"/>
        <end position="203"/>
    </location>
</feature>
<feature type="lipid moiety-binding region" description="S-palmitoyl cysteine; by host" evidence="1">
    <location>
        <position position="4"/>
    </location>
</feature>
<reference key="1">
    <citation type="journal article" date="1996" name="J. Virol.">
        <title>Determination and analysis of the complete nucleotide sequence of human herpesvirus.</title>
        <authorList>
            <person name="Nicholas J."/>
        </authorList>
    </citation>
    <scope>NUCLEOTIDE SEQUENCE [LARGE SCALE GENOMIC DNA]</scope>
</reference>